<name>MVP_CMVIX</name>
<accession>Q66119</accession>
<evidence type="ECO:0000250" key="1"/>
<evidence type="ECO:0000305" key="2"/>
<comment type="function">
    <text evidence="1">Transports viral genome to neighboring plant cells directly through plasmosdesmata, without any budding. The movement protein allows efficient cell to cell propagation, by bypassing the host cell wall barrier. Acts by forming a tubular structure at the host plasmodesmata, enlarging it enough to allow free passage of virion capsids (By similarity).</text>
</comment>
<comment type="subcellular location">
    <subcellularLocation>
        <location evidence="1">Host cell junction</location>
        <location evidence="1">Host plasmodesma</location>
    </subcellularLocation>
    <text evidence="1">Assembles into long tubular structures at the surface of the infected protoplast.</text>
</comment>
<comment type="similarity">
    <text evidence="2">Belongs to the cucumovirus movement protein family.</text>
</comment>
<sequence length="279" mass="30677">MAFQGTSRTLTQQSSAATSDELQKLLFSPEAIKKMATECDLGRHHWMRADNAISVRPLVPEVTHGRIASFFKSGYDAGELSSKGYMSVTQVLCAVTRTVSTDAEGSLRIYLADLGDKELSPIDRQCVTLHNHDLPALVSFQPTYDCPMESVGNRKRCFAVVIERHGYIEYTGTTASVCSNWQARFSSKNNNYTHIAAGKTLVLPFNRLAEQTKPSAVARLLKSQLNNIESSQYVLTDAKINQNARSESEEIIVESPPIVIGSSSASRSEAFRPQVVNGL</sequence>
<gene>
    <name type="ORF">ORF3a</name>
</gene>
<dbReference type="EMBL" id="U20219">
    <property type="protein sequence ID" value="AAC54618.1"/>
    <property type="molecule type" value="Genomic_RNA"/>
</dbReference>
<dbReference type="PIR" id="C71392">
    <property type="entry name" value="C71392"/>
</dbReference>
<dbReference type="Proteomes" id="UP000246998">
    <property type="component" value="Genome"/>
</dbReference>
<dbReference type="GO" id="GO:0044219">
    <property type="term" value="C:host cell plasmodesma"/>
    <property type="evidence" value="ECO:0007669"/>
    <property type="project" value="UniProtKB-SubCell"/>
</dbReference>
<dbReference type="GO" id="GO:0046740">
    <property type="term" value="P:transport of virus in host, cell to cell"/>
    <property type="evidence" value="ECO:0007669"/>
    <property type="project" value="UniProtKB-KW"/>
</dbReference>
<dbReference type="InterPro" id="IPR000603">
    <property type="entry name" value="MPV"/>
</dbReference>
<dbReference type="Pfam" id="PF00803">
    <property type="entry name" value="3A"/>
    <property type="match status" value="1"/>
</dbReference>
<protein>
    <recommendedName>
        <fullName>Movement protein</fullName>
        <shortName>MP</shortName>
    </recommendedName>
    <alternativeName>
        <fullName>Protein 3A</fullName>
    </alternativeName>
</protein>
<reference key="1">
    <citation type="journal article" date="1995" name="J. Gen. Virol.">
        <title>The complete sequence of a cucumber mosaic virus from Ixora that is deficient in the replication of satellite RNAs.</title>
        <authorList>
            <person name="McGarvey P.B."/>
            <person name="Tousignant M."/>
            <person name="Geletka L."/>
            <person name="Cellini F."/>
            <person name="Kaper J.M."/>
        </authorList>
    </citation>
    <scope>NUCLEOTIDE SEQUENCE [GENOMIC RNA]</scope>
</reference>
<feature type="chain" id="PRO_0000083238" description="Movement protein">
    <location>
        <begin position="1"/>
        <end position="279"/>
    </location>
</feature>
<keyword id="KW-1031">Host cell junction</keyword>
<keyword id="KW-0813">Transport</keyword>
<keyword id="KW-0916">Viral movement protein</keyword>
<proteinExistence type="inferred from homology"/>
<organism>
    <name type="scientific">Cucumber mosaic virus (strain Ixora)</name>
    <name type="common">CMV</name>
    <dbReference type="NCBI Taxonomy" id="117114"/>
    <lineage>
        <taxon>Viruses</taxon>
        <taxon>Riboviria</taxon>
        <taxon>Orthornavirae</taxon>
        <taxon>Kitrinoviricota</taxon>
        <taxon>Alsuviricetes</taxon>
        <taxon>Martellivirales</taxon>
        <taxon>Bromoviridae</taxon>
        <taxon>Cucumovirus</taxon>
        <taxon>Cucumber mosaic virus</taxon>
    </lineage>
</organism>
<organismHost>
    <name type="scientific">Cucumis sativus</name>
    <name type="common">Cucumber</name>
    <dbReference type="NCBI Taxonomy" id="3659"/>
</organismHost>
<organismHost>
    <name type="scientific">Solanum lycopersicum</name>
    <name type="common">Tomato</name>
    <name type="synonym">Lycopersicon esculentum</name>
    <dbReference type="NCBI Taxonomy" id="4081"/>
</organismHost>
<organismHost>
    <name type="scientific">Spinacia oleracea</name>
    <name type="common">Spinach</name>
    <dbReference type="NCBI Taxonomy" id="3562"/>
</organismHost>